<dbReference type="ConoServer" id="3755">
    <property type="toxin name" value="Tx10b"/>
</dbReference>
<dbReference type="GO" id="GO:0005576">
    <property type="term" value="C:extracellular region"/>
    <property type="evidence" value="ECO:0007669"/>
    <property type="project" value="UniProtKB-SubCell"/>
</dbReference>
<dbReference type="GO" id="GO:0090729">
    <property type="term" value="F:toxin activity"/>
    <property type="evidence" value="ECO:0007669"/>
    <property type="project" value="UniProtKB-KW"/>
</dbReference>
<accession>P86256</accession>
<sequence>DPCCGYRMCVPC</sequence>
<evidence type="ECO:0000250" key="1">
    <source>
        <dbReference type="UniProtKB" id="P58807"/>
    </source>
</evidence>
<evidence type="ECO:0000250" key="2">
    <source>
        <dbReference type="UniProtKB" id="P58808"/>
    </source>
</evidence>
<evidence type="ECO:0000269" key="3">
    <source>
    </source>
</evidence>
<evidence type="ECO:0000269" key="4">
    <source>
    </source>
</evidence>
<evidence type="ECO:0000305" key="5"/>
<evidence type="ECO:0000305" key="6">
    <source>
    </source>
</evidence>
<evidence type="ECO:0000305" key="7">
    <source>
    </source>
</evidence>
<feature type="peptide" id="PRO_0000371270" description="Chi-conotoxin-like 1" evidence="3">
    <location>
        <begin position="1"/>
        <end position="12"/>
    </location>
</feature>
<feature type="modified residue" description="Methionine sulfoxide; partial" evidence="3">
    <location>
        <position position="8"/>
    </location>
</feature>
<feature type="modified residue" description="4-hydroxyproline" evidence="3 4">
    <location>
        <position position="11"/>
    </location>
</feature>
<feature type="modified residue" description="Cysteine amide" evidence="3 4">
    <location>
        <position position="12"/>
    </location>
</feature>
<feature type="disulfide bond" evidence="1">
    <location>
        <begin position="3"/>
        <end position="12"/>
    </location>
</feature>
<feature type="disulfide bond" evidence="1">
    <location>
        <begin position="4"/>
        <end position="9"/>
    </location>
</feature>
<keyword id="KW-0027">Amidation</keyword>
<keyword id="KW-0903">Direct protein sequencing</keyword>
<keyword id="KW-1015">Disulfide bond</keyword>
<keyword id="KW-0379">Hydroxylation</keyword>
<keyword id="KW-0528">Neurotoxin</keyword>
<keyword id="KW-0558">Oxidation</keyword>
<keyword id="KW-0964">Secreted</keyword>
<keyword id="KW-0800">Toxin</keyword>
<protein>
    <recommendedName>
        <fullName evidence="5">Chi-conotoxin-like 1</fullName>
    </recommendedName>
    <alternativeName>
        <fullName evidence="5">Tx10b</fullName>
    </alternativeName>
</protein>
<organism>
    <name type="scientific">Conus textile</name>
    <name type="common">Cloth-of-gold cone</name>
    <dbReference type="NCBI Taxonomy" id="6494"/>
    <lineage>
        <taxon>Eukaryota</taxon>
        <taxon>Metazoa</taxon>
        <taxon>Spiralia</taxon>
        <taxon>Lophotrochozoa</taxon>
        <taxon>Mollusca</taxon>
        <taxon>Gastropoda</taxon>
        <taxon>Caenogastropoda</taxon>
        <taxon>Neogastropoda</taxon>
        <taxon>Conoidea</taxon>
        <taxon>Conidae</taxon>
        <taxon>Conus</taxon>
        <taxon>Cylinder</taxon>
    </lineage>
</organism>
<comment type="function">
    <text evidence="2">Chi-conotoxins inhibit the neuronal noradrenaline transporter (NET/SLC6A2).</text>
</comment>
<comment type="subcellular location">
    <subcellularLocation>
        <location evidence="3 4">Secreted</location>
    </subcellularLocation>
</comment>
<comment type="tissue specificity">
    <text evidence="6 7">Expressed by the venom duct.</text>
</comment>
<comment type="domain">
    <text evidence="5">The cysteine framework is X (CC-CX[hydroxyPro]C).</text>
</comment>
<comment type="PTM">
    <text evidence="3">Contains 2 disulfide bonds.</text>
</comment>
<comment type="mass spectrometry">
    <text>Without oxidation at Met-8.</text>
</comment>
<comment type="mass spectrometry">
    <text>With oxidation at Met-8.</text>
</comment>
<comment type="similarity">
    <text evidence="5">Belongs to the conotoxin T superfamily.</text>
</comment>
<reference key="1">
    <citation type="journal article" date="2009" name="Proc. Natl. Acad. Sci. U.S.A.">
        <title>Rapid sensitive analysis of cysteine rich peptide venom components.</title>
        <authorList>
            <person name="Ueberheide B.M."/>
            <person name="Fenyo D."/>
            <person name="Alewood P.F."/>
            <person name="Chait B.T."/>
        </authorList>
    </citation>
    <scope>PROTEIN SEQUENCE</scope>
    <scope>SUBCELLULAR LOCATION</scope>
    <scope>MASS SPECTROMETRY</scope>
    <scope>DISULFIDE BONDS</scope>
    <scope>OXIDATION AT MET-8</scope>
    <scope>HYDROXYLATION AT PRO-11</scope>
    <scope>AMIDATION AT CYS-12</scope>
    <source>
        <tissue>Venom</tissue>
    </source>
</reference>
<reference key="2">
    <citation type="journal article" date="2012" name="J. Proteome Res.">
        <title>Constrained de novo sequencing of conotoxins.</title>
        <authorList>
            <person name="Bhatia S."/>
            <person name="Kil Y.J."/>
            <person name="Ueberheide B."/>
            <person name="Chait B.T."/>
            <person name="Tayo L."/>
            <person name="Cruz L."/>
            <person name="Lu B."/>
            <person name="Yates J.R. III"/>
            <person name="Bern M."/>
        </authorList>
    </citation>
    <scope>IDENTIFICATION BY MASS SPECTROMETRY</scope>
    <scope>SUBCELLULAR LOCATION</scope>
    <scope>HYDROXYLATION AT PRO-11</scope>
    <scope>AMIDATION AT CYS-12</scope>
    <source>
        <tissue>Venom</tissue>
    </source>
</reference>
<name>CTAB_CONTE</name>
<proteinExistence type="evidence at protein level"/>